<keyword id="KW-1015">Disulfide bond</keyword>
<keyword id="KW-0325">Glycoprotein</keyword>
<keyword id="KW-0597">Phosphoprotein</keyword>
<keyword id="KW-0732">Signal</keyword>
<keyword id="KW-0758">Storage protein</keyword>
<comment type="function">
    <text>Precursor of the major egg-yolk proteins that are sources of nutrients during early development of oviparous organisms.</text>
</comment>
<comment type="tissue specificity">
    <text>Found in liver, testis and undifferentiated gonads of estrogen-treated fish. Not detected in the brain and spleen.</text>
</comment>
<comment type="induction">
    <text>By steroids (estrogen).</text>
</comment>
<comment type="PTM">
    <text evidence="1">Phosvitin, an egg yolk storage protein, is one of the most highly phosphorylated (10%) proteins in nature.</text>
</comment>
<sequence length="1677" mass="186022">LTIALVGSQQTKYEPSFSGSKTYQYKYEGVILTGLPEKGLARAGLKVHCKVEISEVAQKTYLLKILNPEIQEYNGIWPKAPFYPASKLTQALASQLTQPIKFQYRNGQVGDIFASEDVSDTVLNIQRGILNMLQLTIKTTQNVYGLQENGIAGICEASYVIQEDRKANKIIVTKSKDLNNCNEKIKMDIGMAYSHTCSNCRKIRKNTRGTAAYTYILKPTDTGTLITQATSQEVHQLTPFNEMTGAAITEARQKLVLEDAKVIHVTVPEQELKNRGSIQYQFASEILQTPIQLFKTRSPETKIKEVLQHLVQNNQQQVQSDAPSKFLQLTQLLRACTHENIEGIWRQYEKTQLYRRWILDALPAAATPTAFRFITQRIMKRDLTDAEAIQTLVTAMHLVQTNHQIVQMAAELVFDRANLKCPVLRKHAVLAYGSMVNRYCAETLNCREEALKPLHDFANDAISRAHEEETVLALKALGNAGQPSSIKRIQKCLPGFSSGASQLPVKIQVDAVMALRNIAKKEPGKVQELTMQLFMDHQLHSEVRMVASMVLLETRPSMALVATLAEALLKETSLQVASFTYSHMKAITRSTAPENHALSSACNVAVKLLSRKLDRLSYRYSKAMHMDTFKYPLMAGAAANIHIINNAASILPSAVVMKFQAYILSATADPLEIGLHTEGLQEVLMQNHEHIDQMPSAGKIQQIMKMLSGWKSVPSEKTLASAYIKLFGQEISFSRLDKKTIQEALQAVREPVERQTVIKRVVNQLERGAAAQLSKPLLVAEVRRILPTCIGLPMEMSLYVSAVTTADINVQAHITPSPTNDFNVAQLLNSNIVLHTDVTPSIAMHTIAVMGINTHVIQTGVELHVKARTTVPMKFTAKIDLKEKNFKIESEPCQQETEVLSLSAQAFAISRNVEDLDAAKKNPLLPEEAVRNILNEQFNSGTEDSNERERAGKFARPSAEMMSQELMNSGEHQNRKGAHATRSACAKAKNFGFEVCFEGKSENVAFLRDSPLYKIIGQHHCKIALKPSHSSEATIEKIQLELQTGNKAASKIIRVVAMQSLAEADEMKGNILKKLNKLLTVDGETQDSTLRGFKRRSSSSSSSSSSSSSSSSSSSSSSSQQSRMEKRMEQDKLTENLERDRDHMRGKQSKNKKQEWKNKQKKHHKQLPSSSSSSSSSSSGSNSSSSSSSSSSSSSRSHNHRNNTRTLSKSKRYQNNNNSSSSSGSSSSSEEIQKNPEIFAYRFRSHRDKLGFQNKRGRMSSSSSSSSSSSSQSTLNSKQDAKFLGDSSPPIFAFVARAVRSDGLQQGYQVAAYTDNRVSRPRVQLLATEIIEKSRWQICADAILASNYKAMALMRWGEECQDYKVAVSAVTGRLASHPSLQIKAKWSRIPRAAKQTQNILAEYVPGAAFMLGFSQKEQRNPSKQFKIILAVTSPNTIDTLIKAPKITLFKQAVQIPVQIPMEPSDAERRSPGLASIMNEIPFLIEEATKSKCVAQENKFITFDGVKFSYQMPGGCYHILAQDCRSKVRFMVMLKQASMSKNLRAVNAKIYNKDIDILPTTKGSVRLLINNNEIPLSQLPFTDSSGNIHIKRADEGVSVSAQQYGLESLYFDGKTVQVKVTSEMRGKTCGLCGHNDGERRKEFRMPDGRQARGPSVSPTPGLCLEKTATEAASFCVIM</sequence>
<dbReference type="EMBL" id="U00455">
    <property type="protein sequence ID" value="AAA87392.1"/>
    <property type="molecule type" value="mRNA"/>
</dbReference>
<dbReference type="PIR" id="T43021">
    <property type="entry name" value="T43021"/>
</dbReference>
<dbReference type="SMR" id="Q90243"/>
<dbReference type="GO" id="GO:0005319">
    <property type="term" value="F:lipid transporter activity"/>
    <property type="evidence" value="ECO:0007669"/>
    <property type="project" value="InterPro"/>
</dbReference>
<dbReference type="GO" id="GO:0045735">
    <property type="term" value="F:nutrient reservoir activity"/>
    <property type="evidence" value="ECO:0007669"/>
    <property type="project" value="UniProtKB-KW"/>
</dbReference>
<dbReference type="GO" id="GO:0071391">
    <property type="term" value="P:cellular response to estrogen stimulus"/>
    <property type="evidence" value="ECO:0007669"/>
    <property type="project" value="TreeGrafter"/>
</dbReference>
<dbReference type="GO" id="GO:0032355">
    <property type="term" value="P:response to estradiol"/>
    <property type="evidence" value="ECO:0007669"/>
    <property type="project" value="TreeGrafter"/>
</dbReference>
<dbReference type="FunFam" id="1.25.10.20:FF:000002">
    <property type="entry name" value="Vitellogenin 7"/>
    <property type="match status" value="1"/>
</dbReference>
<dbReference type="FunFam" id="2.30.230.10:FF:000002">
    <property type="entry name" value="Vitellogenin 7"/>
    <property type="match status" value="1"/>
</dbReference>
<dbReference type="Gene3D" id="2.30.230.10">
    <property type="entry name" value="Lipovitellin, beta-sheet shell regions, chain A"/>
    <property type="match status" value="1"/>
</dbReference>
<dbReference type="Gene3D" id="2.20.80.10">
    <property type="entry name" value="Lipovitellin-phosvitin complex, chain A, domain 4"/>
    <property type="match status" value="1"/>
</dbReference>
<dbReference type="Gene3D" id="2.20.50.20">
    <property type="entry name" value="Lipovitellin. Chain A, domain 3"/>
    <property type="match status" value="1"/>
</dbReference>
<dbReference type="Gene3D" id="2.20.90.10">
    <property type="entry name" value="Vitellinogen, beta-sheet shell domain"/>
    <property type="match status" value="1"/>
</dbReference>
<dbReference type="Gene3D" id="1.25.10.20">
    <property type="entry name" value="Vitellinogen, superhelical"/>
    <property type="match status" value="1"/>
</dbReference>
<dbReference type="InterPro" id="IPR015819">
    <property type="entry name" value="Lipid_transp_b-sht_shell"/>
</dbReference>
<dbReference type="InterPro" id="IPR011030">
    <property type="entry name" value="Lipovitellin_superhlx_dom"/>
</dbReference>
<dbReference type="InterPro" id="IPR015816">
    <property type="entry name" value="Vitellinogen_b-sht_N"/>
</dbReference>
<dbReference type="InterPro" id="IPR015258">
    <property type="entry name" value="Vitellinogen_b-sht_shell"/>
</dbReference>
<dbReference type="InterPro" id="IPR037088">
    <property type="entry name" value="Vitellinogen_b-sht_shell_sf"/>
</dbReference>
<dbReference type="InterPro" id="IPR015255">
    <property type="entry name" value="Vitellinogen_open_b-sht"/>
</dbReference>
<dbReference type="InterPro" id="IPR015817">
    <property type="entry name" value="Vitellinogen_open_b-sht_sub1"/>
</dbReference>
<dbReference type="InterPro" id="IPR050733">
    <property type="entry name" value="Vitellogenin/Apolipophorin"/>
</dbReference>
<dbReference type="InterPro" id="IPR001747">
    <property type="entry name" value="Vitellogenin_N"/>
</dbReference>
<dbReference type="InterPro" id="IPR001846">
    <property type="entry name" value="VWF_type-D"/>
</dbReference>
<dbReference type="PANTHER" id="PTHR23345">
    <property type="entry name" value="VITELLOGENIN-RELATED"/>
    <property type="match status" value="1"/>
</dbReference>
<dbReference type="PANTHER" id="PTHR23345:SF9">
    <property type="entry name" value="VITELLOGENIN-RELATED"/>
    <property type="match status" value="1"/>
</dbReference>
<dbReference type="Pfam" id="PF09175">
    <property type="entry name" value="Vit_b-sht_shell"/>
    <property type="match status" value="1"/>
</dbReference>
<dbReference type="Pfam" id="PF09172">
    <property type="entry name" value="Vit_open_b-sht"/>
    <property type="match status" value="1"/>
</dbReference>
<dbReference type="Pfam" id="PF01347">
    <property type="entry name" value="Vitellogenin_N"/>
    <property type="match status" value="1"/>
</dbReference>
<dbReference type="Pfam" id="PF00094">
    <property type="entry name" value="VWD"/>
    <property type="match status" value="1"/>
</dbReference>
<dbReference type="SMART" id="SM01169">
    <property type="entry name" value="DUF1943"/>
    <property type="match status" value="1"/>
</dbReference>
<dbReference type="SMART" id="SM01170">
    <property type="entry name" value="DUF1944"/>
    <property type="match status" value="1"/>
</dbReference>
<dbReference type="SMART" id="SM00638">
    <property type="entry name" value="LPD_N"/>
    <property type="match status" value="1"/>
</dbReference>
<dbReference type="SMART" id="SM00216">
    <property type="entry name" value="VWD"/>
    <property type="match status" value="1"/>
</dbReference>
<dbReference type="SUPFAM" id="SSF56968">
    <property type="entry name" value="Lipovitellin-phosvitin complex, beta-sheet shell regions"/>
    <property type="match status" value="3"/>
</dbReference>
<dbReference type="SUPFAM" id="SSF48431">
    <property type="entry name" value="Lipovitellin-phosvitin complex, superhelical domain"/>
    <property type="match status" value="1"/>
</dbReference>
<dbReference type="PROSITE" id="PS51211">
    <property type="entry name" value="VITELLOGENIN"/>
    <property type="match status" value="1"/>
</dbReference>
<dbReference type="PROSITE" id="PS51233">
    <property type="entry name" value="VWFD"/>
    <property type="match status" value="1"/>
</dbReference>
<feature type="signal peptide" evidence="2">
    <location>
        <begin position="1" status="less than"/>
        <end position="8"/>
    </location>
</feature>
<feature type="chain" id="PRO_0000041576" description="Vitellogenin">
    <location>
        <begin position="9"/>
        <end position="1677"/>
    </location>
</feature>
<feature type="chain" id="PRO_0000041577" description="Lipovitellin I">
    <location>
        <begin position="9"/>
        <end position="1091" status="uncertain"/>
    </location>
</feature>
<feature type="chain" id="PRO_0000041578" description="Phosvitin">
    <location>
        <begin position="1092" status="uncertain"/>
        <end position="1300" status="uncertain"/>
    </location>
</feature>
<feature type="chain" id="PRO_0000041579" description="Lipovitellin II">
    <location>
        <begin position="1301" status="uncertain"/>
        <end position="1677"/>
    </location>
</feature>
<feature type="domain" description="Vitellogenin" evidence="3">
    <location>
        <begin position="17"/>
        <end position="655"/>
    </location>
</feature>
<feature type="domain" description="VWFD" evidence="4">
    <location>
        <begin position="1490"/>
        <end position="1675"/>
    </location>
</feature>
<feature type="region of interest" description="Disordered" evidence="5">
    <location>
        <begin position="1089"/>
        <end position="1232"/>
    </location>
</feature>
<feature type="region of interest" description="Disordered" evidence="5">
    <location>
        <begin position="1252"/>
        <end position="1280"/>
    </location>
</feature>
<feature type="region of interest" description="Disordered" evidence="5">
    <location>
        <begin position="1636"/>
        <end position="1659"/>
    </location>
</feature>
<feature type="compositionally biased region" description="Low complexity" evidence="5">
    <location>
        <begin position="1098"/>
        <end position="1122"/>
    </location>
</feature>
<feature type="compositionally biased region" description="Basic and acidic residues" evidence="5">
    <location>
        <begin position="1123"/>
        <end position="1145"/>
    </location>
</feature>
<feature type="compositionally biased region" description="Low complexity" evidence="5">
    <location>
        <begin position="1169"/>
        <end position="1196"/>
    </location>
</feature>
<feature type="compositionally biased region" description="Basic residues" evidence="5">
    <location>
        <begin position="1197"/>
        <end position="1212"/>
    </location>
</feature>
<feature type="compositionally biased region" description="Low complexity" evidence="5">
    <location>
        <begin position="1215"/>
        <end position="1229"/>
    </location>
</feature>
<feature type="compositionally biased region" description="Low complexity" evidence="5">
    <location>
        <begin position="1260"/>
        <end position="1273"/>
    </location>
</feature>
<feature type="compositionally biased region" description="Basic and acidic residues" evidence="5">
    <location>
        <begin position="1636"/>
        <end position="1649"/>
    </location>
</feature>
<feature type="glycosylation site" description="N-linked (GlcNAc...) asparagine" evidence="2">
    <location>
        <position position="1182"/>
    </location>
</feature>
<feature type="glycosylation site" description="N-linked (GlcNAc...) asparagine" evidence="2">
    <location>
        <position position="1202"/>
    </location>
</feature>
<feature type="glycosylation site" description="N-linked (GlcNAc...) asparagine" evidence="2">
    <location>
        <position position="1217"/>
    </location>
</feature>
<feature type="glycosylation site" description="N-linked (GlcNAc...) asparagine" evidence="2">
    <location>
        <position position="1218"/>
    </location>
</feature>
<feature type="disulfide bond" evidence="4">
    <location>
        <begin position="1492"/>
        <end position="1631"/>
    </location>
</feature>
<feature type="disulfide bond" evidence="4">
    <location>
        <begin position="1515"/>
        <end position="1674"/>
    </location>
</feature>
<feature type="non-terminal residue">
    <location>
        <position position="1"/>
    </location>
</feature>
<evidence type="ECO:0000250" key="1"/>
<evidence type="ECO:0000255" key="2"/>
<evidence type="ECO:0000255" key="3">
    <source>
        <dbReference type="PROSITE-ProRule" id="PRU00557"/>
    </source>
</evidence>
<evidence type="ECO:0000255" key="4">
    <source>
        <dbReference type="PROSITE-ProRule" id="PRU00580"/>
    </source>
</evidence>
<evidence type="ECO:0000256" key="5">
    <source>
        <dbReference type="SAM" id="MobiDB-lite"/>
    </source>
</evidence>
<name>VIT_ACITR</name>
<accession>Q90243</accession>
<reference key="1">
    <citation type="journal article" date="1995" name="J. Mol. Evol.">
        <title>Characterization of vitellogenin from white sturgeon, Acipenser transmontanus.</title>
        <authorList>
            <person name="Bidwell C.A."/>
            <person name="Carlson D.M."/>
        </authorList>
    </citation>
    <scope>NUCLEOTIDE SEQUENCE [MRNA]</scope>
    <source>
        <strain>UC Davis Broodstock</strain>
        <tissue>Liver</tissue>
    </source>
</reference>
<protein>
    <recommendedName>
        <fullName>Vitellogenin</fullName>
        <shortName>VTG</shortName>
    </recommendedName>
    <component>
        <recommendedName>
            <fullName>Lipovitellin I</fullName>
            <shortName>LVI</shortName>
        </recommendedName>
    </component>
    <component>
        <recommendedName>
            <fullName>Phosvitin</fullName>
            <shortName>PV</shortName>
        </recommendedName>
    </component>
    <component>
        <recommendedName>
            <fullName>Lipovitellin II</fullName>
            <shortName>LVII</shortName>
        </recommendedName>
    </component>
</protein>
<organism>
    <name type="scientific">Acipenser transmontanus</name>
    <name type="common">White sturgeon</name>
    <dbReference type="NCBI Taxonomy" id="7904"/>
    <lineage>
        <taxon>Eukaryota</taxon>
        <taxon>Metazoa</taxon>
        <taxon>Chordata</taxon>
        <taxon>Craniata</taxon>
        <taxon>Vertebrata</taxon>
        <taxon>Euteleostomi</taxon>
        <taxon>Actinopterygii</taxon>
        <taxon>Chondrostei</taxon>
        <taxon>Acipenseriformes</taxon>
        <taxon>Acipenseridae</taxon>
        <taxon>Acipenser</taxon>
    </lineage>
</organism>
<proteinExistence type="evidence at transcript level"/>